<sequence>MHTLIKGVLEEILEAEVIIEYPKDREHGHYATPIAFNLAKVFKKSPLAIAEELALKIGSHEKTQGFFDRVVACKGYINFTLSLDFLERFTQKALELKEQFGSQVKSERSQKIFLEFVSANPTGPLHIGHARGAVFGDSLAKIARFLGHEVLCEYYVNDMGSQIRLLGVSVWLAYKEHVLKESVTYPEVFYKGEYIIEIAKKAHNDLEPSLFKENEETIIEVLSDYAKDLMLLEIKGNLDALDIHFDSYASEKEVFKHKDAVFDRLEKANALYEKDSKTWLKSSLYQDESDRVLIKEDKSYTYLAGDIVYHDEKFQQNYTKYINIWGADHHGYIARVKASLEFLGYDSSKLEVLLAQMVRLLKDNEPYKMSKRAGNFILIKDVIDDVGKDALRFIFLSKRLDTHLEFDVNTLKKQDSSNPIYYIHYANSRIHTMLEKSPFSKEEILQTPLKNLNAEEKYLLFSALSLPKAVESSFEEYGLQKMCEYAKTLASEFHRFYNAGKILDTPKAKELLKICLMVSLSLTNAFKLLGIEIKTKISSKD</sequence>
<dbReference type="EC" id="6.1.1.19"/>
<dbReference type="EMBL" id="AE001439">
    <property type="protein sequence ID" value="AAD05887.1"/>
    <property type="molecule type" value="Genomic_DNA"/>
</dbReference>
<dbReference type="PIR" id="H71947">
    <property type="entry name" value="H71947"/>
</dbReference>
<dbReference type="RefSeq" id="WP_000557128.1">
    <property type="nucleotide sequence ID" value="NC_000921.1"/>
</dbReference>
<dbReference type="SMR" id="Q9ZMB9"/>
<dbReference type="KEGG" id="hpj:jhp_0302"/>
<dbReference type="PATRIC" id="fig|85963.30.peg.711"/>
<dbReference type="eggNOG" id="COG0018">
    <property type="taxonomic scope" value="Bacteria"/>
</dbReference>
<dbReference type="Proteomes" id="UP000000804">
    <property type="component" value="Chromosome"/>
</dbReference>
<dbReference type="GO" id="GO:0005737">
    <property type="term" value="C:cytoplasm"/>
    <property type="evidence" value="ECO:0007669"/>
    <property type="project" value="UniProtKB-SubCell"/>
</dbReference>
<dbReference type="GO" id="GO:0004814">
    <property type="term" value="F:arginine-tRNA ligase activity"/>
    <property type="evidence" value="ECO:0007669"/>
    <property type="project" value="UniProtKB-UniRule"/>
</dbReference>
<dbReference type="GO" id="GO:0005524">
    <property type="term" value="F:ATP binding"/>
    <property type="evidence" value="ECO:0007669"/>
    <property type="project" value="UniProtKB-UniRule"/>
</dbReference>
<dbReference type="GO" id="GO:0006420">
    <property type="term" value="P:arginyl-tRNA aminoacylation"/>
    <property type="evidence" value="ECO:0007669"/>
    <property type="project" value="UniProtKB-UniRule"/>
</dbReference>
<dbReference type="CDD" id="cd00671">
    <property type="entry name" value="ArgRS_core"/>
    <property type="match status" value="1"/>
</dbReference>
<dbReference type="FunFam" id="3.30.1360.70:FF:000008">
    <property type="entry name" value="Arginine--tRNA ligase"/>
    <property type="match status" value="1"/>
</dbReference>
<dbReference type="FunFam" id="3.40.50.620:FF:000062">
    <property type="entry name" value="Arginine--tRNA ligase"/>
    <property type="match status" value="1"/>
</dbReference>
<dbReference type="Gene3D" id="3.30.1360.70">
    <property type="entry name" value="Arginyl tRNA synthetase N-terminal domain"/>
    <property type="match status" value="1"/>
</dbReference>
<dbReference type="Gene3D" id="3.40.50.620">
    <property type="entry name" value="HUPs"/>
    <property type="match status" value="1"/>
</dbReference>
<dbReference type="Gene3D" id="1.10.730.10">
    <property type="entry name" value="Isoleucyl-tRNA Synthetase, Domain 1"/>
    <property type="match status" value="1"/>
</dbReference>
<dbReference type="HAMAP" id="MF_00123">
    <property type="entry name" value="Arg_tRNA_synth"/>
    <property type="match status" value="1"/>
</dbReference>
<dbReference type="InterPro" id="IPR001412">
    <property type="entry name" value="aa-tRNA-synth_I_CS"/>
</dbReference>
<dbReference type="InterPro" id="IPR001278">
    <property type="entry name" value="Arg-tRNA-ligase"/>
</dbReference>
<dbReference type="InterPro" id="IPR005148">
    <property type="entry name" value="Arg-tRNA-synth_N"/>
</dbReference>
<dbReference type="InterPro" id="IPR036695">
    <property type="entry name" value="Arg-tRNA-synth_N_sf"/>
</dbReference>
<dbReference type="InterPro" id="IPR035684">
    <property type="entry name" value="ArgRS_core"/>
</dbReference>
<dbReference type="InterPro" id="IPR008909">
    <property type="entry name" value="DALR_anticod-bd"/>
</dbReference>
<dbReference type="InterPro" id="IPR014729">
    <property type="entry name" value="Rossmann-like_a/b/a_fold"/>
</dbReference>
<dbReference type="InterPro" id="IPR009080">
    <property type="entry name" value="tRNAsynth_Ia_anticodon-bd"/>
</dbReference>
<dbReference type="NCBIfam" id="TIGR00456">
    <property type="entry name" value="argS"/>
    <property type="match status" value="1"/>
</dbReference>
<dbReference type="PANTHER" id="PTHR11956:SF5">
    <property type="entry name" value="ARGININE--TRNA LIGASE, CYTOPLASMIC"/>
    <property type="match status" value="1"/>
</dbReference>
<dbReference type="PANTHER" id="PTHR11956">
    <property type="entry name" value="ARGINYL-TRNA SYNTHETASE"/>
    <property type="match status" value="1"/>
</dbReference>
<dbReference type="Pfam" id="PF03485">
    <property type="entry name" value="Arg_tRNA_synt_N"/>
    <property type="match status" value="1"/>
</dbReference>
<dbReference type="Pfam" id="PF05746">
    <property type="entry name" value="DALR_1"/>
    <property type="match status" value="1"/>
</dbReference>
<dbReference type="Pfam" id="PF00750">
    <property type="entry name" value="tRNA-synt_1d"/>
    <property type="match status" value="1"/>
</dbReference>
<dbReference type="PRINTS" id="PR01038">
    <property type="entry name" value="TRNASYNTHARG"/>
</dbReference>
<dbReference type="SMART" id="SM01016">
    <property type="entry name" value="Arg_tRNA_synt_N"/>
    <property type="match status" value="1"/>
</dbReference>
<dbReference type="SMART" id="SM00836">
    <property type="entry name" value="DALR_1"/>
    <property type="match status" value="1"/>
</dbReference>
<dbReference type="SUPFAM" id="SSF47323">
    <property type="entry name" value="Anticodon-binding domain of a subclass of class I aminoacyl-tRNA synthetases"/>
    <property type="match status" value="1"/>
</dbReference>
<dbReference type="SUPFAM" id="SSF55190">
    <property type="entry name" value="Arginyl-tRNA synthetase (ArgRS), N-terminal 'additional' domain"/>
    <property type="match status" value="1"/>
</dbReference>
<dbReference type="SUPFAM" id="SSF52374">
    <property type="entry name" value="Nucleotidylyl transferase"/>
    <property type="match status" value="1"/>
</dbReference>
<dbReference type="PROSITE" id="PS00178">
    <property type="entry name" value="AA_TRNA_LIGASE_I"/>
    <property type="match status" value="1"/>
</dbReference>
<name>SYR_HELPJ</name>
<proteinExistence type="inferred from homology"/>
<accession>Q9ZMB9</accession>
<reference key="1">
    <citation type="journal article" date="1999" name="Nature">
        <title>Genomic sequence comparison of two unrelated isolates of the human gastric pathogen Helicobacter pylori.</title>
        <authorList>
            <person name="Alm R.A."/>
            <person name="Ling L.-S.L."/>
            <person name="Moir D.T."/>
            <person name="King B.L."/>
            <person name="Brown E.D."/>
            <person name="Doig P.C."/>
            <person name="Smith D.R."/>
            <person name="Noonan B."/>
            <person name="Guild B.C."/>
            <person name="deJonge B.L."/>
            <person name="Carmel G."/>
            <person name="Tummino P.J."/>
            <person name="Caruso A."/>
            <person name="Uria-Nickelsen M."/>
            <person name="Mills D.M."/>
            <person name="Ives C."/>
            <person name="Gibson R."/>
            <person name="Merberg D."/>
            <person name="Mills S.D."/>
            <person name="Jiang Q."/>
            <person name="Taylor D.E."/>
            <person name="Vovis G.F."/>
            <person name="Trust T.J."/>
        </authorList>
    </citation>
    <scope>NUCLEOTIDE SEQUENCE [LARGE SCALE GENOMIC DNA]</scope>
    <source>
        <strain>J99 / ATCC 700824</strain>
    </source>
</reference>
<evidence type="ECO:0000250" key="1"/>
<evidence type="ECO:0000305" key="2"/>
<comment type="catalytic activity">
    <reaction>
        <text>tRNA(Arg) + L-arginine + ATP = L-arginyl-tRNA(Arg) + AMP + diphosphate</text>
        <dbReference type="Rhea" id="RHEA:20301"/>
        <dbReference type="Rhea" id="RHEA-COMP:9658"/>
        <dbReference type="Rhea" id="RHEA-COMP:9673"/>
        <dbReference type="ChEBI" id="CHEBI:30616"/>
        <dbReference type="ChEBI" id="CHEBI:32682"/>
        <dbReference type="ChEBI" id="CHEBI:33019"/>
        <dbReference type="ChEBI" id="CHEBI:78442"/>
        <dbReference type="ChEBI" id="CHEBI:78513"/>
        <dbReference type="ChEBI" id="CHEBI:456215"/>
        <dbReference type="EC" id="6.1.1.19"/>
    </reaction>
</comment>
<comment type="subunit">
    <text evidence="1">Monomer.</text>
</comment>
<comment type="subcellular location">
    <subcellularLocation>
        <location evidence="1">Cytoplasm</location>
    </subcellularLocation>
</comment>
<comment type="similarity">
    <text evidence="2">Belongs to the class-I aminoacyl-tRNA synthetase family.</text>
</comment>
<organism>
    <name type="scientific">Helicobacter pylori (strain J99 / ATCC 700824)</name>
    <name type="common">Campylobacter pylori J99</name>
    <dbReference type="NCBI Taxonomy" id="85963"/>
    <lineage>
        <taxon>Bacteria</taxon>
        <taxon>Pseudomonadati</taxon>
        <taxon>Campylobacterota</taxon>
        <taxon>Epsilonproteobacteria</taxon>
        <taxon>Campylobacterales</taxon>
        <taxon>Helicobacteraceae</taxon>
        <taxon>Helicobacter</taxon>
    </lineage>
</organism>
<keyword id="KW-0030">Aminoacyl-tRNA synthetase</keyword>
<keyword id="KW-0067">ATP-binding</keyword>
<keyword id="KW-0963">Cytoplasm</keyword>
<keyword id="KW-0436">Ligase</keyword>
<keyword id="KW-0547">Nucleotide-binding</keyword>
<keyword id="KW-0648">Protein biosynthesis</keyword>
<gene>
    <name type="primary">argS</name>
    <name type="ordered locus">jhp_0302</name>
</gene>
<feature type="chain" id="PRO_0000151566" description="Arginine--tRNA ligase">
    <location>
        <begin position="1"/>
        <end position="541"/>
    </location>
</feature>
<feature type="short sequence motif" description="'HIGH' region">
    <location>
        <begin position="119"/>
        <end position="129"/>
    </location>
</feature>
<protein>
    <recommendedName>
        <fullName>Arginine--tRNA ligase</fullName>
        <ecNumber>6.1.1.19</ecNumber>
    </recommendedName>
    <alternativeName>
        <fullName>Arginyl-tRNA synthetase</fullName>
        <shortName>ArgRS</shortName>
    </alternativeName>
</protein>